<evidence type="ECO:0000250" key="1"/>
<evidence type="ECO:0000305" key="2"/>
<keyword id="KW-0012">Acyltransferase</keyword>
<keyword id="KW-0093">Biotin biosynthesis</keyword>
<keyword id="KW-0663">Pyridoxal phosphate</keyword>
<keyword id="KW-0808">Transferase</keyword>
<reference key="1">
    <citation type="submission" date="2008-06" db="EMBL/GenBank/DDBJ databases">
        <title>Complete sequence of Chlorobaculum parvum NCIB 8327.</title>
        <authorList>
            <consortium name="US DOE Joint Genome Institute"/>
            <person name="Lucas S."/>
            <person name="Copeland A."/>
            <person name="Lapidus A."/>
            <person name="Glavina del Rio T."/>
            <person name="Dalin E."/>
            <person name="Tice H."/>
            <person name="Bruce D."/>
            <person name="Goodwin L."/>
            <person name="Pitluck S."/>
            <person name="Schmutz J."/>
            <person name="Larimer F."/>
            <person name="Land M."/>
            <person name="Hauser L."/>
            <person name="Kyrpides N."/>
            <person name="Mikhailova N."/>
            <person name="Zhao F."/>
            <person name="Li T."/>
            <person name="Liu Z."/>
            <person name="Overmann J."/>
            <person name="Bryant D.A."/>
            <person name="Richardson P."/>
        </authorList>
    </citation>
    <scope>NUCLEOTIDE SEQUENCE [LARGE SCALE GENOMIC DNA]</scope>
    <source>
        <strain>DSM 263 / NCIMB 8327</strain>
    </source>
</reference>
<sequence>MPIEEHIAREQERLRAKQRYRTLPETGARRGPYITVGGRELLNLSSNDYLGLGSEPKLLASWMAQVECGGADGRFAMTSSSSRLLTGNFPVGGELESAIAKAYGSEAALVFNSGYHANTGILPSLSTRHDLILSDRLNHASIIDGLRIAEAEYRRYRHADYDHLEELLASAAGKYRQVFIVTESVFSMDGDLADLRRLVDLKKRYGAMLIVDEAHGVGVYGQRGLGLCEALGVLENIDILIGTFGKALASTGAYAVMSGLFREYLVNTMRTLIFTTALPPMMLSWSLATFTRQLEMRREREHLLGLAARLRETLGDAGFETPGESHIVPVVLGEDRAAVAMAAALREAGYHALPVRPPTVPENSARLRLSLRADLAVEQIDALASTMQSLRS</sequence>
<accession>B3QLR6</accession>
<gene>
    <name type="ordered locus">Cpar_2015</name>
</gene>
<proteinExistence type="inferred from homology"/>
<feature type="chain" id="PRO_0000380952" description="8-amino-7-oxononanoate synthase">
    <location>
        <begin position="1"/>
        <end position="392"/>
    </location>
</feature>
<feature type="binding site" evidence="1">
    <location>
        <position position="21"/>
    </location>
    <ligand>
        <name>substrate</name>
    </ligand>
</feature>
<feature type="binding site" evidence="1">
    <location>
        <begin position="114"/>
        <end position="115"/>
    </location>
    <ligand>
        <name>pyridoxal 5'-phosphate</name>
        <dbReference type="ChEBI" id="CHEBI:597326"/>
    </ligand>
</feature>
<feature type="binding site" evidence="1">
    <location>
        <position position="139"/>
    </location>
    <ligand>
        <name>substrate</name>
    </ligand>
</feature>
<feature type="binding site" evidence="1">
    <location>
        <position position="187"/>
    </location>
    <ligand>
        <name>pyridoxal 5'-phosphate</name>
        <dbReference type="ChEBI" id="CHEBI:597326"/>
    </ligand>
</feature>
<feature type="binding site" evidence="1">
    <location>
        <begin position="212"/>
        <end position="215"/>
    </location>
    <ligand>
        <name>pyridoxal 5'-phosphate</name>
        <dbReference type="ChEBI" id="CHEBI:597326"/>
    </ligand>
</feature>
<feature type="binding site" evidence="1">
    <location>
        <begin position="243"/>
        <end position="246"/>
    </location>
    <ligand>
        <name>pyridoxal 5'-phosphate</name>
        <dbReference type="ChEBI" id="CHEBI:597326"/>
    </ligand>
</feature>
<feature type="binding site" evidence="1">
    <location>
        <position position="359"/>
    </location>
    <ligand>
        <name>substrate</name>
    </ligand>
</feature>
<feature type="modified residue" description="N6-(pyridoxal phosphate)lysine" evidence="1">
    <location>
        <position position="246"/>
    </location>
</feature>
<organism>
    <name type="scientific">Chlorobaculum parvum (strain DSM 263 / NCIMB 8327)</name>
    <name type="common">Chlorobium vibrioforme subsp. thiosulfatophilum</name>
    <dbReference type="NCBI Taxonomy" id="517417"/>
    <lineage>
        <taxon>Bacteria</taxon>
        <taxon>Pseudomonadati</taxon>
        <taxon>Chlorobiota</taxon>
        <taxon>Chlorobiia</taxon>
        <taxon>Chlorobiales</taxon>
        <taxon>Chlorobiaceae</taxon>
        <taxon>Chlorobaculum</taxon>
    </lineage>
</organism>
<name>BIOF_CHLP8</name>
<dbReference type="EC" id="2.3.1.47"/>
<dbReference type="EMBL" id="CP001099">
    <property type="protein sequence ID" value="ACF12402.1"/>
    <property type="status" value="ALT_INIT"/>
    <property type="molecule type" value="Genomic_DNA"/>
</dbReference>
<dbReference type="SMR" id="B3QLR6"/>
<dbReference type="STRING" id="517417.Cpar_2015"/>
<dbReference type="KEGG" id="cpc:Cpar_2015"/>
<dbReference type="eggNOG" id="COG0156">
    <property type="taxonomic scope" value="Bacteria"/>
</dbReference>
<dbReference type="HOGENOM" id="CLU_015846_11_2_10"/>
<dbReference type="OrthoDB" id="9807157at2"/>
<dbReference type="UniPathway" id="UPA00078"/>
<dbReference type="Proteomes" id="UP000008811">
    <property type="component" value="Chromosome"/>
</dbReference>
<dbReference type="GO" id="GO:0008710">
    <property type="term" value="F:8-amino-7-oxononanoate synthase activity"/>
    <property type="evidence" value="ECO:0007669"/>
    <property type="project" value="UniProtKB-EC"/>
</dbReference>
<dbReference type="GO" id="GO:0030170">
    <property type="term" value="F:pyridoxal phosphate binding"/>
    <property type="evidence" value="ECO:0007669"/>
    <property type="project" value="InterPro"/>
</dbReference>
<dbReference type="GO" id="GO:0009102">
    <property type="term" value="P:biotin biosynthetic process"/>
    <property type="evidence" value="ECO:0007669"/>
    <property type="project" value="UniProtKB-UniPathway"/>
</dbReference>
<dbReference type="CDD" id="cd06454">
    <property type="entry name" value="KBL_like"/>
    <property type="match status" value="1"/>
</dbReference>
<dbReference type="Gene3D" id="3.90.1150.10">
    <property type="entry name" value="Aspartate Aminotransferase, domain 1"/>
    <property type="match status" value="1"/>
</dbReference>
<dbReference type="Gene3D" id="3.40.640.10">
    <property type="entry name" value="Type I PLP-dependent aspartate aminotransferase-like (Major domain)"/>
    <property type="match status" value="1"/>
</dbReference>
<dbReference type="InterPro" id="IPR004839">
    <property type="entry name" value="Aminotransferase_I/II_large"/>
</dbReference>
<dbReference type="InterPro" id="IPR050087">
    <property type="entry name" value="AON_synthase_class-II"/>
</dbReference>
<dbReference type="InterPro" id="IPR015424">
    <property type="entry name" value="PyrdxlP-dep_Trfase"/>
</dbReference>
<dbReference type="InterPro" id="IPR015421">
    <property type="entry name" value="PyrdxlP-dep_Trfase_major"/>
</dbReference>
<dbReference type="InterPro" id="IPR015422">
    <property type="entry name" value="PyrdxlP-dep_Trfase_small"/>
</dbReference>
<dbReference type="PANTHER" id="PTHR13693:SF100">
    <property type="entry name" value="8-AMINO-7-OXONONANOATE SYNTHASE"/>
    <property type="match status" value="1"/>
</dbReference>
<dbReference type="PANTHER" id="PTHR13693">
    <property type="entry name" value="CLASS II AMINOTRANSFERASE/8-AMINO-7-OXONONANOATE SYNTHASE"/>
    <property type="match status" value="1"/>
</dbReference>
<dbReference type="Pfam" id="PF00155">
    <property type="entry name" value="Aminotran_1_2"/>
    <property type="match status" value="1"/>
</dbReference>
<dbReference type="SUPFAM" id="SSF53383">
    <property type="entry name" value="PLP-dependent transferases"/>
    <property type="match status" value="1"/>
</dbReference>
<protein>
    <recommendedName>
        <fullName>8-amino-7-oxononanoate synthase</fullName>
        <shortName>AONS</shortName>
        <ecNumber>2.3.1.47</ecNumber>
    </recommendedName>
    <alternativeName>
        <fullName>7-keto-8-amino-pelargonic acid synthase</fullName>
        <shortName>7-KAP synthase</shortName>
        <shortName>KAPA synthase</shortName>
    </alternativeName>
    <alternativeName>
        <fullName>8-amino-7-ketopelargonate synthase</fullName>
    </alternativeName>
    <alternativeName>
        <fullName>Alpha-oxoamine synthase</fullName>
    </alternativeName>
</protein>
<comment type="function">
    <text evidence="1">Catalyzes the decarboxylative condensation of pimeloyl-[acyl-carrier protein] and L-alanine to produce 8-amino-7-oxononanoate (AON), [acyl-carrier protein], and carbon dioxide.</text>
</comment>
<comment type="catalytic activity">
    <reaction>
        <text>6-carboxyhexanoyl-[ACP] + L-alanine + H(+) = (8S)-8-amino-7-oxononanoate + holo-[ACP] + CO2</text>
        <dbReference type="Rhea" id="RHEA:42288"/>
        <dbReference type="Rhea" id="RHEA-COMP:9685"/>
        <dbReference type="Rhea" id="RHEA-COMP:9955"/>
        <dbReference type="ChEBI" id="CHEBI:15378"/>
        <dbReference type="ChEBI" id="CHEBI:16526"/>
        <dbReference type="ChEBI" id="CHEBI:57972"/>
        <dbReference type="ChEBI" id="CHEBI:64479"/>
        <dbReference type="ChEBI" id="CHEBI:78846"/>
        <dbReference type="ChEBI" id="CHEBI:149468"/>
        <dbReference type="EC" id="2.3.1.47"/>
    </reaction>
</comment>
<comment type="cofactor">
    <cofactor evidence="1">
        <name>pyridoxal 5'-phosphate</name>
        <dbReference type="ChEBI" id="CHEBI:597326"/>
    </cofactor>
</comment>
<comment type="pathway">
    <text>Cofactor biosynthesis; biotin biosynthesis.</text>
</comment>
<comment type="subunit">
    <text evidence="1">Homodimer.</text>
</comment>
<comment type="similarity">
    <text evidence="2">Belongs to the class-II pyridoxal-phosphate-dependent aminotransferase family. BioF subfamily.</text>
</comment>
<comment type="sequence caution" evidence="2">
    <conflict type="erroneous initiation">
        <sequence resource="EMBL-CDS" id="ACF12402"/>
    </conflict>
    <text>Extended N-terminus.</text>
</comment>